<comment type="function">
    <text evidence="1">Rab effector protein acting as linker between gamma-adaptin, RAB4A or RAB5A. Involved in endocytic membrane fusion and membrane trafficking of recycling endosomes. Stimulates nucleotide exchange on RAB5A (By similarity). Can act as a ubiquitin ligase (By similarity).</text>
</comment>
<comment type="subunit">
    <text evidence="1 7">Heterodimer with RABEP1. The heterodimer binds RAB4A and RAB5A that have been activated by GTP-binding. Binds TSC2, GGA1, GGA2, GGA3, AP1G1 and AP1G2 (By similarity). Interacts with RAB21, and with 100-fold lower affinity also with RAB22 (By similarity). Interacts with ubiquitinated EGFR (By similarity). Interacts with RGS14; the interaction is GTP-dependent.</text>
</comment>
<comment type="subcellular location">
    <subcellularLocation>
        <location evidence="1">Cytoplasm</location>
    </subcellularLocation>
    <subcellularLocation>
        <location evidence="1">Early endosome</location>
    </subcellularLocation>
    <subcellularLocation>
        <location evidence="1">Recycling endosome</location>
    </subcellularLocation>
</comment>
<comment type="tissue specificity">
    <text evidence="7">Expressed in the white matter tracts of the cerebellum, the fimbria hippocampi and the corpus callosum.</text>
</comment>
<comment type="PTM">
    <text evidence="1">Monoubiquitinated.</text>
</comment>
<accession>Q9JM13</accession>
<accession>Q3UIW0</accession>
<protein>
    <recommendedName>
        <fullName>Rab5 GDP/GTP exchange factor</fullName>
    </recommendedName>
    <alternativeName>
        <fullName>Rabex-5</fullName>
    </alternativeName>
</protein>
<dbReference type="EMBL" id="AF093590">
    <property type="protein sequence ID" value="AAF28738.1"/>
    <property type="molecule type" value="mRNA"/>
</dbReference>
<dbReference type="EMBL" id="AK044568">
    <property type="protein sequence ID" value="BAC31984.1"/>
    <property type="molecule type" value="mRNA"/>
</dbReference>
<dbReference type="EMBL" id="AK146734">
    <property type="protein sequence ID" value="BAE27396.1"/>
    <property type="molecule type" value="mRNA"/>
</dbReference>
<dbReference type="EMBL" id="BC018229">
    <property type="protein sequence ID" value="AAH18229.1"/>
    <property type="molecule type" value="mRNA"/>
</dbReference>
<dbReference type="CCDS" id="CCDS19708.1"/>
<dbReference type="RefSeq" id="NP_001185988.1">
    <property type="nucleotide sequence ID" value="NM_001199059.2"/>
</dbReference>
<dbReference type="RefSeq" id="NP_001390209.1">
    <property type="nucleotide sequence ID" value="NM_001403280.1"/>
</dbReference>
<dbReference type="RefSeq" id="NP_064367.1">
    <property type="nucleotide sequence ID" value="NM_019983.3"/>
</dbReference>
<dbReference type="SMR" id="Q9JM13"/>
<dbReference type="BioGRID" id="208140">
    <property type="interactions" value="21"/>
</dbReference>
<dbReference type="FunCoup" id="Q9JM13">
    <property type="interactions" value="1746"/>
</dbReference>
<dbReference type="IntAct" id="Q9JM13">
    <property type="interactions" value="2"/>
</dbReference>
<dbReference type="STRING" id="10090.ENSMUSP00000026390"/>
<dbReference type="GlyGen" id="Q9JM13">
    <property type="glycosylation" value="1 site, 1 O-linked glycan (1 site)"/>
</dbReference>
<dbReference type="iPTMnet" id="Q9JM13"/>
<dbReference type="PhosphoSitePlus" id="Q9JM13"/>
<dbReference type="SwissPalm" id="Q9JM13"/>
<dbReference type="jPOST" id="Q9JM13"/>
<dbReference type="PaxDb" id="10090-ENSMUSP00000026390"/>
<dbReference type="PeptideAtlas" id="Q9JM13"/>
<dbReference type="ProteomicsDB" id="255071"/>
<dbReference type="Pumba" id="Q9JM13"/>
<dbReference type="DNASU" id="56715"/>
<dbReference type="Ensembl" id="ENSMUST00000026390.8">
    <property type="protein sequence ID" value="ENSMUSP00000026390.8"/>
    <property type="gene ID" value="ENSMUSG00000025340.15"/>
</dbReference>
<dbReference type="Ensembl" id="ENSMUST00000119797.8">
    <property type="protein sequence ID" value="ENSMUSP00000114103.2"/>
    <property type="gene ID" value="ENSMUSG00000025340.15"/>
</dbReference>
<dbReference type="GeneID" id="56715"/>
<dbReference type="KEGG" id="mmu:56715"/>
<dbReference type="UCSC" id="uc008zuf.2">
    <property type="organism name" value="mouse"/>
</dbReference>
<dbReference type="AGR" id="MGI:1929459"/>
<dbReference type="CTD" id="27342"/>
<dbReference type="MGI" id="MGI:1929459">
    <property type="gene designation" value="Rabgef1"/>
</dbReference>
<dbReference type="VEuPathDB" id="HostDB:ENSMUSG00000025340"/>
<dbReference type="eggNOG" id="KOG2319">
    <property type="taxonomic scope" value="Eukaryota"/>
</dbReference>
<dbReference type="eggNOG" id="KOG3173">
    <property type="taxonomic scope" value="Eukaryota"/>
</dbReference>
<dbReference type="GeneTree" id="ENSGT00940000154540"/>
<dbReference type="HOGENOM" id="CLU_018416_1_1_1"/>
<dbReference type="InParanoid" id="Q9JM13"/>
<dbReference type="OMA" id="PTITCAT"/>
<dbReference type="OrthoDB" id="300289at2759"/>
<dbReference type="PhylomeDB" id="Q9JM13"/>
<dbReference type="TreeFam" id="TF321331"/>
<dbReference type="Reactome" id="R-MMU-8876198">
    <property type="pathway name" value="RAB GEFs exchange GTP for GDP on RABs"/>
</dbReference>
<dbReference type="BioGRID-ORCS" id="56715">
    <property type="hits" value="10 hits in 78 CRISPR screens"/>
</dbReference>
<dbReference type="ChiTaRS" id="Rabgef1">
    <property type="organism name" value="mouse"/>
</dbReference>
<dbReference type="PRO" id="PR:Q9JM13"/>
<dbReference type="Proteomes" id="UP000000589">
    <property type="component" value="Chromosome 5"/>
</dbReference>
<dbReference type="RNAct" id="Q9JM13">
    <property type="molecule type" value="protein"/>
</dbReference>
<dbReference type="Bgee" id="ENSMUSG00000025340">
    <property type="expression patterns" value="Expressed in retinal neural layer and 252 other cell types or tissues"/>
</dbReference>
<dbReference type="ExpressionAtlas" id="Q9JM13">
    <property type="expression patterns" value="baseline and differential"/>
</dbReference>
<dbReference type="GO" id="GO:0005829">
    <property type="term" value="C:cytosol"/>
    <property type="evidence" value="ECO:0007669"/>
    <property type="project" value="Ensembl"/>
</dbReference>
<dbReference type="GO" id="GO:0030425">
    <property type="term" value="C:dendrite"/>
    <property type="evidence" value="ECO:0007669"/>
    <property type="project" value="GOC"/>
</dbReference>
<dbReference type="GO" id="GO:0005769">
    <property type="term" value="C:early endosome"/>
    <property type="evidence" value="ECO:0007669"/>
    <property type="project" value="UniProtKB-SubCell"/>
</dbReference>
<dbReference type="GO" id="GO:0005730">
    <property type="term" value="C:nucleolus"/>
    <property type="evidence" value="ECO:0007669"/>
    <property type="project" value="Ensembl"/>
</dbReference>
<dbReference type="GO" id="GO:0098830">
    <property type="term" value="C:presynaptic endosome"/>
    <property type="evidence" value="ECO:0007669"/>
    <property type="project" value="Ensembl"/>
</dbReference>
<dbReference type="GO" id="GO:0055037">
    <property type="term" value="C:recycling endosome"/>
    <property type="evidence" value="ECO:0007669"/>
    <property type="project" value="UniProtKB-SubCell"/>
</dbReference>
<dbReference type="GO" id="GO:0031982">
    <property type="term" value="C:vesicle"/>
    <property type="evidence" value="ECO:0000314"/>
    <property type="project" value="MGI"/>
</dbReference>
<dbReference type="GO" id="GO:0003677">
    <property type="term" value="F:DNA binding"/>
    <property type="evidence" value="ECO:0007669"/>
    <property type="project" value="InterPro"/>
</dbReference>
<dbReference type="GO" id="GO:0005085">
    <property type="term" value="F:guanyl-nucleotide exchange factor activity"/>
    <property type="evidence" value="ECO:0007669"/>
    <property type="project" value="Ensembl"/>
</dbReference>
<dbReference type="GO" id="GO:0031267">
    <property type="term" value="F:small GTPase binding"/>
    <property type="evidence" value="ECO:0007669"/>
    <property type="project" value="Ensembl"/>
</dbReference>
<dbReference type="GO" id="GO:0061630">
    <property type="term" value="F:ubiquitin protein ligase activity"/>
    <property type="evidence" value="ECO:0000314"/>
    <property type="project" value="MGI"/>
</dbReference>
<dbReference type="GO" id="GO:0008270">
    <property type="term" value="F:zinc ion binding"/>
    <property type="evidence" value="ECO:0007669"/>
    <property type="project" value="UniProtKB-KW"/>
</dbReference>
<dbReference type="GO" id="GO:0098935">
    <property type="term" value="P:dendritic transport"/>
    <property type="evidence" value="ECO:0000314"/>
    <property type="project" value="SynGO"/>
</dbReference>
<dbReference type="GO" id="GO:0051649">
    <property type="term" value="P:establishment of localization in cell"/>
    <property type="evidence" value="ECO:0000315"/>
    <property type="project" value="MGI"/>
</dbReference>
<dbReference type="GO" id="GO:0038109">
    <property type="term" value="P:Kit signaling pathway"/>
    <property type="evidence" value="ECO:0000315"/>
    <property type="project" value="MGI"/>
</dbReference>
<dbReference type="GO" id="GO:0043303">
    <property type="term" value="P:mast cell degranulation"/>
    <property type="evidence" value="ECO:0000315"/>
    <property type="project" value="MGI"/>
</dbReference>
<dbReference type="GO" id="GO:0097531">
    <property type="term" value="P:mast cell migration"/>
    <property type="evidence" value="ECO:0000315"/>
    <property type="project" value="MGI"/>
</dbReference>
<dbReference type="GO" id="GO:0050728">
    <property type="term" value="P:negative regulation of inflammatory response"/>
    <property type="evidence" value="ECO:0000315"/>
    <property type="project" value="MGI"/>
</dbReference>
<dbReference type="GO" id="GO:0032715">
    <property type="term" value="P:negative regulation of interleukin-6 production"/>
    <property type="evidence" value="ECO:0000315"/>
    <property type="project" value="MGI"/>
</dbReference>
<dbReference type="GO" id="GO:1900235">
    <property type="term" value="P:negative regulation of Kit signaling pathway"/>
    <property type="evidence" value="ECO:0000315"/>
    <property type="project" value="MGI"/>
</dbReference>
<dbReference type="GO" id="GO:0002686">
    <property type="term" value="P:negative regulation of leukocyte migration"/>
    <property type="evidence" value="ECO:0000315"/>
    <property type="project" value="MGI"/>
</dbReference>
<dbReference type="GO" id="GO:0033004">
    <property type="term" value="P:negative regulation of mast cell activation"/>
    <property type="evidence" value="ECO:0000315"/>
    <property type="project" value="MGI"/>
</dbReference>
<dbReference type="GO" id="GO:0032764">
    <property type="term" value="P:negative regulation of mast cell cytokine production"/>
    <property type="evidence" value="ECO:0000315"/>
    <property type="project" value="MGI"/>
</dbReference>
<dbReference type="GO" id="GO:0043305">
    <property type="term" value="P:negative regulation of mast cell degranulation"/>
    <property type="evidence" value="ECO:0000315"/>
    <property type="project" value="MGI"/>
</dbReference>
<dbReference type="GO" id="GO:0046580">
    <property type="term" value="P:negative regulation of Ras protein signal transduction"/>
    <property type="evidence" value="ECO:0000315"/>
    <property type="project" value="MGI"/>
</dbReference>
<dbReference type="GO" id="GO:0048261">
    <property type="term" value="P:negative regulation of receptor-mediated endocytosis"/>
    <property type="evidence" value="ECO:0000315"/>
    <property type="project" value="MGI"/>
</dbReference>
<dbReference type="GO" id="GO:0006612">
    <property type="term" value="P:protein targeting to membrane"/>
    <property type="evidence" value="ECO:0007669"/>
    <property type="project" value="Ensembl"/>
</dbReference>
<dbReference type="GO" id="GO:0015031">
    <property type="term" value="P:protein transport"/>
    <property type="evidence" value="ECO:0007669"/>
    <property type="project" value="UniProtKB-KW"/>
</dbReference>
<dbReference type="GO" id="GO:0007265">
    <property type="term" value="P:Ras protein signal transduction"/>
    <property type="evidence" value="ECO:0000315"/>
    <property type="project" value="MGI"/>
</dbReference>
<dbReference type="GO" id="GO:0006898">
    <property type="term" value="P:receptor-mediated endocytosis"/>
    <property type="evidence" value="ECO:0000315"/>
    <property type="project" value="MGI"/>
</dbReference>
<dbReference type="GO" id="GO:0060368">
    <property type="term" value="P:regulation of Fc receptor mediated stimulatory signaling pathway"/>
    <property type="evidence" value="ECO:0000314"/>
    <property type="project" value="MGI"/>
</dbReference>
<dbReference type="FunFam" id="1.20.5.4770:FF:000002">
    <property type="entry name" value="rab5 GDP/GTP exchange factor isoform X1"/>
    <property type="match status" value="1"/>
</dbReference>
<dbReference type="FunFam" id="1.20.1050.80:FF:000003">
    <property type="entry name" value="rab5 GDP/GTP exchange factor isoform X2"/>
    <property type="match status" value="1"/>
</dbReference>
<dbReference type="Gene3D" id="1.10.246.120">
    <property type="match status" value="1"/>
</dbReference>
<dbReference type="Gene3D" id="1.20.5.4770">
    <property type="match status" value="1"/>
</dbReference>
<dbReference type="Gene3D" id="1.20.1050.80">
    <property type="entry name" value="VPS9 domain"/>
    <property type="match status" value="1"/>
</dbReference>
<dbReference type="InterPro" id="IPR041545">
    <property type="entry name" value="DUF5601"/>
</dbReference>
<dbReference type="InterPro" id="IPR003123">
    <property type="entry name" value="VPS9"/>
</dbReference>
<dbReference type="InterPro" id="IPR045046">
    <property type="entry name" value="Vps9-like"/>
</dbReference>
<dbReference type="InterPro" id="IPR037191">
    <property type="entry name" value="VPS9_dom_sf"/>
</dbReference>
<dbReference type="InterPro" id="IPR002653">
    <property type="entry name" value="Znf_A20"/>
</dbReference>
<dbReference type="PANTHER" id="PTHR23101">
    <property type="entry name" value="RAB GDP/GTP EXCHANGE FACTOR"/>
    <property type="match status" value="1"/>
</dbReference>
<dbReference type="PANTHER" id="PTHR23101:SF126">
    <property type="entry name" value="RAB5 GDP_GTP EXCHANGE FACTOR"/>
    <property type="match status" value="1"/>
</dbReference>
<dbReference type="Pfam" id="PF18151">
    <property type="entry name" value="DUF5601"/>
    <property type="match status" value="1"/>
</dbReference>
<dbReference type="Pfam" id="PF02204">
    <property type="entry name" value="VPS9"/>
    <property type="match status" value="1"/>
</dbReference>
<dbReference type="Pfam" id="PF01754">
    <property type="entry name" value="zf-A20"/>
    <property type="match status" value="1"/>
</dbReference>
<dbReference type="SMART" id="SM00167">
    <property type="entry name" value="VPS9"/>
    <property type="match status" value="1"/>
</dbReference>
<dbReference type="SMART" id="SM00259">
    <property type="entry name" value="ZnF_A20"/>
    <property type="match status" value="1"/>
</dbReference>
<dbReference type="SUPFAM" id="SSF57716">
    <property type="entry name" value="Glucocorticoid receptor-like (DNA-binding domain)"/>
    <property type="match status" value="1"/>
</dbReference>
<dbReference type="SUPFAM" id="SSF109993">
    <property type="entry name" value="VPS9 domain"/>
    <property type="match status" value="1"/>
</dbReference>
<dbReference type="PROSITE" id="PS51205">
    <property type="entry name" value="VPS9"/>
    <property type="match status" value="1"/>
</dbReference>
<dbReference type="PROSITE" id="PS51036">
    <property type="entry name" value="ZF_A20"/>
    <property type="match status" value="1"/>
</dbReference>
<feature type="chain" id="PRO_0000191316" description="Rab5 GDP/GTP exchange factor">
    <location>
        <begin position="1"/>
        <end position="491"/>
    </location>
</feature>
<feature type="domain" description="VPS9" evidence="5">
    <location>
        <begin position="232"/>
        <end position="375"/>
    </location>
</feature>
<feature type="zinc finger region" description="A20-type" evidence="4">
    <location>
        <begin position="13"/>
        <end position="47"/>
    </location>
</feature>
<feature type="region of interest" description="Interaction with ubiquitinated proteins" evidence="1">
    <location>
        <begin position="1"/>
        <end position="74"/>
    </location>
</feature>
<feature type="region of interest" description="Disordered" evidence="6">
    <location>
        <begin position="66"/>
        <end position="85"/>
    </location>
</feature>
<feature type="region of interest" description="Disordered" evidence="6">
    <location>
        <begin position="462"/>
        <end position="491"/>
    </location>
</feature>
<feature type="coiled-coil region" evidence="3">
    <location>
        <begin position="407"/>
        <end position="448"/>
    </location>
</feature>
<feature type="compositionally biased region" description="Low complexity" evidence="6">
    <location>
        <begin position="69"/>
        <end position="84"/>
    </location>
</feature>
<feature type="binding site" evidence="4">
    <location>
        <position position="19"/>
    </location>
    <ligand>
        <name>Zn(2+)</name>
        <dbReference type="ChEBI" id="CHEBI:29105"/>
    </ligand>
</feature>
<feature type="binding site" evidence="4">
    <location>
        <position position="23"/>
    </location>
    <ligand>
        <name>Zn(2+)</name>
        <dbReference type="ChEBI" id="CHEBI:29105"/>
    </ligand>
</feature>
<feature type="binding site" evidence="4">
    <location>
        <position position="35"/>
    </location>
    <ligand>
        <name>Zn(2+)</name>
        <dbReference type="ChEBI" id="CHEBI:29105"/>
    </ligand>
</feature>
<feature type="binding site" evidence="4">
    <location>
        <position position="38"/>
    </location>
    <ligand>
        <name>Zn(2+)</name>
        <dbReference type="ChEBI" id="CHEBI:29105"/>
    </ligand>
</feature>
<feature type="modified residue" description="Phosphoserine" evidence="2">
    <location>
        <position position="124"/>
    </location>
</feature>
<feature type="modified residue" description="Phosphoserine" evidence="2">
    <location>
        <position position="132"/>
    </location>
</feature>
<feature type="modified residue" description="N6-acetyllysine" evidence="2">
    <location>
        <position position="151"/>
    </location>
</feature>
<feature type="modified residue" description="N6-acetyllysine" evidence="2">
    <location>
        <position position="170"/>
    </location>
</feature>
<feature type="modified residue" description="Phosphoserine" evidence="2">
    <location>
        <position position="373"/>
    </location>
</feature>
<feature type="modified residue" description="Phosphoserine" evidence="2">
    <location>
        <position position="377"/>
    </location>
</feature>
<feature type="modified residue" description="Phosphoserine" evidence="8">
    <location>
        <position position="390"/>
    </location>
</feature>
<gene>
    <name type="primary">Rabgef1</name>
    <name type="synonym">Rabex5</name>
</gene>
<proteinExistence type="evidence at protein level"/>
<keyword id="KW-0007">Acetylation</keyword>
<keyword id="KW-0175">Coiled coil</keyword>
<keyword id="KW-0963">Cytoplasm</keyword>
<keyword id="KW-0254">Endocytosis</keyword>
<keyword id="KW-0967">Endosome</keyword>
<keyword id="KW-0479">Metal-binding</keyword>
<keyword id="KW-0597">Phosphoprotein</keyword>
<keyword id="KW-0653">Protein transport</keyword>
<keyword id="KW-1185">Reference proteome</keyword>
<keyword id="KW-0813">Transport</keyword>
<keyword id="KW-0832">Ubl conjugation</keyword>
<keyword id="KW-0833">Ubl conjugation pathway</keyword>
<keyword id="KW-0862">Zinc</keyword>
<keyword id="KW-0863">Zinc-finger</keyword>
<name>RABX5_MOUSE</name>
<reference key="1">
    <citation type="submission" date="1998-09" db="EMBL/GenBank/DDBJ databases">
        <title>Rabex-5 is a negative regulator of Fc-epsilon-RI-dependent and Ras-mediated mast cell activation.</title>
        <authorList>
            <person name="Tam S.-Y."/>
            <person name="Tsai M."/>
            <person name="Galli S.J."/>
        </authorList>
    </citation>
    <scope>NUCLEOTIDE SEQUENCE [MRNA]</scope>
    <source>
        <strain>BALB/cJ</strain>
        <tissue>Brain</tissue>
    </source>
</reference>
<reference key="2">
    <citation type="journal article" date="2005" name="Science">
        <title>The transcriptional landscape of the mammalian genome.</title>
        <authorList>
            <person name="Carninci P."/>
            <person name="Kasukawa T."/>
            <person name="Katayama S."/>
            <person name="Gough J."/>
            <person name="Frith M.C."/>
            <person name="Maeda N."/>
            <person name="Oyama R."/>
            <person name="Ravasi T."/>
            <person name="Lenhard B."/>
            <person name="Wells C."/>
            <person name="Kodzius R."/>
            <person name="Shimokawa K."/>
            <person name="Bajic V.B."/>
            <person name="Brenner S.E."/>
            <person name="Batalov S."/>
            <person name="Forrest A.R."/>
            <person name="Zavolan M."/>
            <person name="Davis M.J."/>
            <person name="Wilming L.G."/>
            <person name="Aidinis V."/>
            <person name="Allen J.E."/>
            <person name="Ambesi-Impiombato A."/>
            <person name="Apweiler R."/>
            <person name="Aturaliya R.N."/>
            <person name="Bailey T.L."/>
            <person name="Bansal M."/>
            <person name="Baxter L."/>
            <person name="Beisel K.W."/>
            <person name="Bersano T."/>
            <person name="Bono H."/>
            <person name="Chalk A.M."/>
            <person name="Chiu K.P."/>
            <person name="Choudhary V."/>
            <person name="Christoffels A."/>
            <person name="Clutterbuck D.R."/>
            <person name="Crowe M.L."/>
            <person name="Dalla E."/>
            <person name="Dalrymple B.P."/>
            <person name="de Bono B."/>
            <person name="Della Gatta G."/>
            <person name="di Bernardo D."/>
            <person name="Down T."/>
            <person name="Engstrom P."/>
            <person name="Fagiolini M."/>
            <person name="Faulkner G."/>
            <person name="Fletcher C.F."/>
            <person name="Fukushima T."/>
            <person name="Furuno M."/>
            <person name="Futaki S."/>
            <person name="Gariboldi M."/>
            <person name="Georgii-Hemming P."/>
            <person name="Gingeras T.R."/>
            <person name="Gojobori T."/>
            <person name="Green R.E."/>
            <person name="Gustincich S."/>
            <person name="Harbers M."/>
            <person name="Hayashi Y."/>
            <person name="Hensch T.K."/>
            <person name="Hirokawa N."/>
            <person name="Hill D."/>
            <person name="Huminiecki L."/>
            <person name="Iacono M."/>
            <person name="Ikeo K."/>
            <person name="Iwama A."/>
            <person name="Ishikawa T."/>
            <person name="Jakt M."/>
            <person name="Kanapin A."/>
            <person name="Katoh M."/>
            <person name="Kawasawa Y."/>
            <person name="Kelso J."/>
            <person name="Kitamura H."/>
            <person name="Kitano H."/>
            <person name="Kollias G."/>
            <person name="Krishnan S.P."/>
            <person name="Kruger A."/>
            <person name="Kummerfeld S.K."/>
            <person name="Kurochkin I.V."/>
            <person name="Lareau L.F."/>
            <person name="Lazarevic D."/>
            <person name="Lipovich L."/>
            <person name="Liu J."/>
            <person name="Liuni S."/>
            <person name="McWilliam S."/>
            <person name="Madan Babu M."/>
            <person name="Madera M."/>
            <person name="Marchionni L."/>
            <person name="Matsuda H."/>
            <person name="Matsuzawa S."/>
            <person name="Miki H."/>
            <person name="Mignone F."/>
            <person name="Miyake S."/>
            <person name="Morris K."/>
            <person name="Mottagui-Tabar S."/>
            <person name="Mulder N."/>
            <person name="Nakano N."/>
            <person name="Nakauchi H."/>
            <person name="Ng P."/>
            <person name="Nilsson R."/>
            <person name="Nishiguchi S."/>
            <person name="Nishikawa S."/>
            <person name="Nori F."/>
            <person name="Ohara O."/>
            <person name="Okazaki Y."/>
            <person name="Orlando V."/>
            <person name="Pang K.C."/>
            <person name="Pavan W.J."/>
            <person name="Pavesi G."/>
            <person name="Pesole G."/>
            <person name="Petrovsky N."/>
            <person name="Piazza S."/>
            <person name="Reed J."/>
            <person name="Reid J.F."/>
            <person name="Ring B.Z."/>
            <person name="Ringwald M."/>
            <person name="Rost B."/>
            <person name="Ruan Y."/>
            <person name="Salzberg S.L."/>
            <person name="Sandelin A."/>
            <person name="Schneider C."/>
            <person name="Schoenbach C."/>
            <person name="Sekiguchi K."/>
            <person name="Semple C.A."/>
            <person name="Seno S."/>
            <person name="Sessa L."/>
            <person name="Sheng Y."/>
            <person name="Shibata Y."/>
            <person name="Shimada H."/>
            <person name="Shimada K."/>
            <person name="Silva D."/>
            <person name="Sinclair B."/>
            <person name="Sperling S."/>
            <person name="Stupka E."/>
            <person name="Sugiura K."/>
            <person name="Sultana R."/>
            <person name="Takenaka Y."/>
            <person name="Taki K."/>
            <person name="Tammoja K."/>
            <person name="Tan S.L."/>
            <person name="Tang S."/>
            <person name="Taylor M.S."/>
            <person name="Tegner J."/>
            <person name="Teichmann S.A."/>
            <person name="Ueda H.R."/>
            <person name="van Nimwegen E."/>
            <person name="Verardo R."/>
            <person name="Wei C.L."/>
            <person name="Yagi K."/>
            <person name="Yamanishi H."/>
            <person name="Zabarovsky E."/>
            <person name="Zhu S."/>
            <person name="Zimmer A."/>
            <person name="Hide W."/>
            <person name="Bult C."/>
            <person name="Grimmond S.M."/>
            <person name="Teasdale R.D."/>
            <person name="Liu E.T."/>
            <person name="Brusic V."/>
            <person name="Quackenbush J."/>
            <person name="Wahlestedt C."/>
            <person name="Mattick J.S."/>
            <person name="Hume D.A."/>
            <person name="Kai C."/>
            <person name="Sasaki D."/>
            <person name="Tomaru Y."/>
            <person name="Fukuda S."/>
            <person name="Kanamori-Katayama M."/>
            <person name="Suzuki M."/>
            <person name="Aoki J."/>
            <person name="Arakawa T."/>
            <person name="Iida J."/>
            <person name="Imamura K."/>
            <person name="Itoh M."/>
            <person name="Kato T."/>
            <person name="Kawaji H."/>
            <person name="Kawagashira N."/>
            <person name="Kawashima T."/>
            <person name="Kojima M."/>
            <person name="Kondo S."/>
            <person name="Konno H."/>
            <person name="Nakano K."/>
            <person name="Ninomiya N."/>
            <person name="Nishio T."/>
            <person name="Okada M."/>
            <person name="Plessy C."/>
            <person name="Shibata K."/>
            <person name="Shiraki T."/>
            <person name="Suzuki S."/>
            <person name="Tagami M."/>
            <person name="Waki K."/>
            <person name="Watahiki A."/>
            <person name="Okamura-Oho Y."/>
            <person name="Suzuki H."/>
            <person name="Kawai J."/>
            <person name="Hayashizaki Y."/>
        </authorList>
    </citation>
    <scope>NUCLEOTIDE SEQUENCE [LARGE SCALE MRNA]</scope>
    <source>
        <strain>C57BL/6J</strain>
        <tissue>Amnion</tissue>
        <tissue>Retina</tissue>
    </source>
</reference>
<reference key="3">
    <citation type="journal article" date="2004" name="Genome Res.">
        <title>The status, quality, and expansion of the NIH full-length cDNA project: the Mammalian Gene Collection (MGC).</title>
        <authorList>
            <consortium name="The MGC Project Team"/>
        </authorList>
    </citation>
    <scope>NUCLEOTIDE SEQUENCE [LARGE SCALE MRNA]</scope>
    <source>
        <tissue>Retina</tissue>
    </source>
</reference>
<reference key="4">
    <citation type="journal article" date="2000" name="Biochem. J.">
        <title>RGS14 is a novel Rap effector that preferentially regulates the GTPase activity of galphao.</title>
        <authorList>
            <person name="Traver S."/>
            <person name="Bidot C."/>
            <person name="Spassky N."/>
            <person name="Baltauss T."/>
            <person name="De Tand M.F."/>
            <person name="Thomas J.L."/>
            <person name="Zalc B."/>
            <person name="Janoueix-Lerosey I."/>
            <person name="Gunzburg J.D."/>
        </authorList>
    </citation>
    <scope>INTERACTION WITH RGS14</scope>
    <scope>TISSUE SPECIFICITY</scope>
</reference>
<reference key="5">
    <citation type="journal article" date="2010" name="Cell">
        <title>A tissue-specific atlas of mouse protein phosphorylation and expression.</title>
        <authorList>
            <person name="Huttlin E.L."/>
            <person name="Jedrychowski M.P."/>
            <person name="Elias J.E."/>
            <person name="Goswami T."/>
            <person name="Rad R."/>
            <person name="Beausoleil S.A."/>
            <person name="Villen J."/>
            <person name="Haas W."/>
            <person name="Sowa M.E."/>
            <person name="Gygi S.P."/>
        </authorList>
    </citation>
    <scope>PHOSPHORYLATION [LARGE SCALE ANALYSIS] AT SER-390</scope>
    <scope>IDENTIFICATION BY MASS SPECTROMETRY [LARGE SCALE ANALYSIS]</scope>
    <source>
        <tissue>Brain</tissue>
        <tissue>Lung</tissue>
        <tissue>Spleen</tissue>
        <tissue>Testis</tissue>
    </source>
</reference>
<sequence>MSLKSERRGIHVDQSELLCKKGCGYYGNPAWQGFCSKCWREEYHKARQRQIQEDWELAERLQREEEEAFASSQSSQGAQSLTFSKFEEKKTNEKTRKVTTVKKFFSASSRAGSKKEIQEAKAPSPSINRQTSIETDRVTKEFIDFLKTFHKTGQEVYKQTKMFLEAMPYKRDLSIEEQSECTQDFYQNVAERMQTRGKVPPEKVEKIMDQIEKHIMTRLYKFVFCPETTDDEKKDLAIQKRIRALHWVTPQMLCVPVNEEIPEVSDMVVKAITDIIEMDSKRVPRDKLACITRCSKHIFNAIKITKNEPASADDFLPTLIYIVLKGNPPRLQSNIQYITRFCNPSRLMTGEDGYYFTNLCCAVAFIEKLDAQSLNLSQEDFDRYMSGQTSPRKQESESWPPEACLGVKQMYKNLDLLSQLNERQERIMNEAKKLEKDLIDWTDGIAKEVQDIVEKYPLEIKPPNQPLAAIDSENVENDKLPPPLQPQVYAG</sequence>
<organism>
    <name type="scientific">Mus musculus</name>
    <name type="common">Mouse</name>
    <dbReference type="NCBI Taxonomy" id="10090"/>
    <lineage>
        <taxon>Eukaryota</taxon>
        <taxon>Metazoa</taxon>
        <taxon>Chordata</taxon>
        <taxon>Craniata</taxon>
        <taxon>Vertebrata</taxon>
        <taxon>Euteleostomi</taxon>
        <taxon>Mammalia</taxon>
        <taxon>Eutheria</taxon>
        <taxon>Euarchontoglires</taxon>
        <taxon>Glires</taxon>
        <taxon>Rodentia</taxon>
        <taxon>Myomorpha</taxon>
        <taxon>Muroidea</taxon>
        <taxon>Muridae</taxon>
        <taxon>Murinae</taxon>
        <taxon>Mus</taxon>
        <taxon>Mus</taxon>
    </lineage>
</organism>
<evidence type="ECO:0000250" key="1"/>
<evidence type="ECO:0000250" key="2">
    <source>
        <dbReference type="UniProtKB" id="Q9UJ41"/>
    </source>
</evidence>
<evidence type="ECO:0000255" key="3"/>
<evidence type="ECO:0000255" key="4">
    <source>
        <dbReference type="PROSITE-ProRule" id="PRU00451"/>
    </source>
</evidence>
<evidence type="ECO:0000255" key="5">
    <source>
        <dbReference type="PROSITE-ProRule" id="PRU00550"/>
    </source>
</evidence>
<evidence type="ECO:0000256" key="6">
    <source>
        <dbReference type="SAM" id="MobiDB-lite"/>
    </source>
</evidence>
<evidence type="ECO:0000269" key="7">
    <source>
    </source>
</evidence>
<evidence type="ECO:0007744" key="8">
    <source>
    </source>
</evidence>